<organism>
    <name type="scientific">Arabidopsis thaliana</name>
    <name type="common">Mouse-ear cress</name>
    <dbReference type="NCBI Taxonomy" id="3702"/>
    <lineage>
        <taxon>Eukaryota</taxon>
        <taxon>Viridiplantae</taxon>
        <taxon>Streptophyta</taxon>
        <taxon>Embryophyta</taxon>
        <taxon>Tracheophyta</taxon>
        <taxon>Spermatophyta</taxon>
        <taxon>Magnoliopsida</taxon>
        <taxon>eudicotyledons</taxon>
        <taxon>Gunneridae</taxon>
        <taxon>Pentapetalae</taxon>
        <taxon>rosids</taxon>
        <taxon>malvids</taxon>
        <taxon>Brassicales</taxon>
        <taxon>Brassicaceae</taxon>
        <taxon>Camelineae</taxon>
        <taxon>Arabidopsis</taxon>
    </lineage>
</organism>
<gene>
    <name type="primary">NRAMP4</name>
    <name type="ordered locus">At5g67330</name>
    <name type="ORF">K8K14.5</name>
</gene>
<proteinExistence type="evidence at transcript level"/>
<comment type="function">
    <text evidence="2 3 4">Vacuolar metal transporter involved in intracellular metal homeostasis. Can transport iron (Fe), manganese (Mn) and cadmium (Cd). Regulates metal accumulation under Fe starvation. Acts redundantly with NRAMP3 to mobilize vacuolar Fe and provide sufficient Fe during seed germination. In association with NRAMP3, required for optimal growth and photosynthesis under Mn deficiency. Exports Mn from vacuoles in leaf mesophyll cells, making Mn available for functional photosystem II in chloroplasts.</text>
</comment>
<comment type="subcellular location">
    <subcellularLocation>
        <location evidence="3">Vacuole membrane</location>
        <topology evidence="3">Multi-pass membrane protein</topology>
    </subcellularLocation>
</comment>
<comment type="tissue specificity">
    <text evidence="3">Expressed in vascular tissues.</text>
</comment>
<comment type="induction">
    <text evidence="2 3">By iron starvation.</text>
</comment>
<comment type="disruption phenotype">
    <text evidence="3">No visible phenotype under normal growth condition, but slightly enhanced resistance of root growth in presence of Cd and increased accumulation of Mn and Zn under Fe starvation.</text>
</comment>
<comment type="similarity">
    <text evidence="5">Belongs to the NRAMP (TC 2.A.55) family.</text>
</comment>
<protein>
    <recommendedName>
        <fullName>Metal transporter Nramp4</fullName>
        <shortName>AtNramp4</shortName>
    </recommendedName>
</protein>
<reference key="1">
    <citation type="journal article" date="2000" name="Proc. Natl. Acad. Sci. U.S.A.">
        <title>Cadmium and iron transport by members of a plant metal transporter family in Arabidopsis with homology to Nramp genes.</title>
        <authorList>
            <person name="Thomine S."/>
            <person name="Wang R."/>
            <person name="Ward J.M."/>
            <person name="Crawford N.M."/>
            <person name="Schroeder J.I."/>
        </authorList>
    </citation>
    <scope>NUCLEOTIDE SEQUENCE [MRNA]</scope>
    <scope>FUNCTION</scope>
    <scope>INDUCTION</scope>
    <source>
        <strain>cv. Columbia</strain>
    </source>
</reference>
<reference key="2">
    <citation type="journal article" date="1997" name="DNA Res.">
        <title>Structural analysis of Arabidopsis thaliana chromosome 5. III. Sequence features of the regions of 1,191,918 bp covered by seventeen physically assigned P1 clones.</title>
        <authorList>
            <person name="Nakamura Y."/>
            <person name="Sato S."/>
            <person name="Kaneko T."/>
            <person name="Kotani H."/>
            <person name="Asamizu E."/>
            <person name="Miyajima N."/>
            <person name="Tabata S."/>
        </authorList>
    </citation>
    <scope>NUCLEOTIDE SEQUENCE [LARGE SCALE GENOMIC DNA]</scope>
    <source>
        <strain>cv. Columbia</strain>
    </source>
</reference>
<reference key="3">
    <citation type="journal article" date="2017" name="Plant J.">
        <title>Araport11: a complete reannotation of the Arabidopsis thaliana reference genome.</title>
        <authorList>
            <person name="Cheng C.Y."/>
            <person name="Krishnakumar V."/>
            <person name="Chan A.P."/>
            <person name="Thibaud-Nissen F."/>
            <person name="Schobel S."/>
            <person name="Town C.D."/>
        </authorList>
    </citation>
    <scope>GENOME REANNOTATION</scope>
    <source>
        <strain>cv. Columbia</strain>
    </source>
</reference>
<reference key="4">
    <citation type="journal article" date="2003" name="Science">
        <title>Empirical analysis of transcriptional activity in the Arabidopsis genome.</title>
        <authorList>
            <person name="Yamada K."/>
            <person name="Lim J."/>
            <person name="Dale J.M."/>
            <person name="Chen H."/>
            <person name="Shinn P."/>
            <person name="Palm C.J."/>
            <person name="Southwick A.M."/>
            <person name="Wu H.C."/>
            <person name="Kim C.J."/>
            <person name="Nguyen M."/>
            <person name="Pham P.K."/>
            <person name="Cheuk R.F."/>
            <person name="Karlin-Newmann G."/>
            <person name="Liu S.X."/>
            <person name="Lam B."/>
            <person name="Sakano H."/>
            <person name="Wu T."/>
            <person name="Yu G."/>
            <person name="Miranda M."/>
            <person name="Quach H.L."/>
            <person name="Tripp M."/>
            <person name="Chang C.H."/>
            <person name="Lee J.M."/>
            <person name="Toriumi M.J."/>
            <person name="Chan M.M."/>
            <person name="Tang C.C."/>
            <person name="Onodera C.S."/>
            <person name="Deng J.M."/>
            <person name="Akiyama K."/>
            <person name="Ansari Y."/>
            <person name="Arakawa T."/>
            <person name="Banh J."/>
            <person name="Banno F."/>
            <person name="Bowser L."/>
            <person name="Brooks S.Y."/>
            <person name="Carninci P."/>
            <person name="Chao Q."/>
            <person name="Choy N."/>
            <person name="Enju A."/>
            <person name="Goldsmith A.D."/>
            <person name="Gurjal M."/>
            <person name="Hansen N.F."/>
            <person name="Hayashizaki Y."/>
            <person name="Johnson-Hopson C."/>
            <person name="Hsuan V.W."/>
            <person name="Iida K."/>
            <person name="Karnes M."/>
            <person name="Khan S."/>
            <person name="Koesema E."/>
            <person name="Ishida J."/>
            <person name="Jiang P.X."/>
            <person name="Jones T."/>
            <person name="Kawai J."/>
            <person name="Kamiya A."/>
            <person name="Meyers C."/>
            <person name="Nakajima M."/>
            <person name="Narusaka M."/>
            <person name="Seki M."/>
            <person name="Sakurai T."/>
            <person name="Satou M."/>
            <person name="Tamse R."/>
            <person name="Vaysberg M."/>
            <person name="Wallender E.K."/>
            <person name="Wong C."/>
            <person name="Yamamura Y."/>
            <person name="Yuan S."/>
            <person name="Shinozaki K."/>
            <person name="Davis R.W."/>
            <person name="Theologis A."/>
            <person name="Ecker J.R."/>
        </authorList>
    </citation>
    <scope>NUCLEOTIDE SEQUENCE [LARGE SCALE MRNA]</scope>
    <source>
        <strain>cv. Columbia</strain>
    </source>
</reference>
<reference key="5">
    <citation type="submission" date="2006-07" db="EMBL/GenBank/DDBJ databases">
        <title>Large-scale analysis of RIKEN Arabidopsis full-length (RAFL) cDNAs.</title>
        <authorList>
            <person name="Totoki Y."/>
            <person name="Seki M."/>
            <person name="Ishida J."/>
            <person name="Nakajima M."/>
            <person name="Enju A."/>
            <person name="Kamiya A."/>
            <person name="Narusaka M."/>
            <person name="Shin-i T."/>
            <person name="Nakagawa M."/>
            <person name="Sakamoto N."/>
            <person name="Oishi K."/>
            <person name="Kohara Y."/>
            <person name="Kobayashi M."/>
            <person name="Toyoda A."/>
            <person name="Sakaki Y."/>
            <person name="Sakurai T."/>
            <person name="Iida K."/>
            <person name="Akiyama K."/>
            <person name="Satou M."/>
            <person name="Toyoda T."/>
            <person name="Konagaya A."/>
            <person name="Carninci P."/>
            <person name="Kawai J."/>
            <person name="Hayashizaki Y."/>
            <person name="Shinozaki K."/>
        </authorList>
    </citation>
    <scope>NUCLEOTIDE SEQUENCE [LARGE SCALE MRNA] OF 4-512</scope>
    <source>
        <strain>cv. Columbia</strain>
    </source>
</reference>
<reference key="6">
    <citation type="journal article" date="2005" name="EMBO J.">
        <title>Mobilization of vacuolar iron by AtNRAMP3 and AtNRAMP4 is essential for seed germination on low iron.</title>
        <authorList>
            <person name="Lanquar V."/>
            <person name="Lelievre F."/>
            <person name="Bolte S."/>
            <person name="Hames C."/>
            <person name="Alcon C."/>
            <person name="Neumann D."/>
            <person name="Vansuyt G."/>
            <person name="Curie C."/>
            <person name="Schroeder A."/>
            <person name="Kraemer U."/>
            <person name="Barbier-Brygoo H."/>
            <person name="Thomine S."/>
        </authorList>
    </citation>
    <scope>FUNCTION</scope>
    <scope>SUBCELLULAR LOCATION</scope>
    <scope>TISSUE SPECIFICITY</scope>
    <scope>INDUCTION</scope>
    <scope>DISRUPTION PHENOTYPE</scope>
    <source>
        <strain>cv. Wassilewskija</strain>
    </source>
</reference>
<reference key="7">
    <citation type="journal article" date="2010" name="Plant Physiol.">
        <title>Export of vacuolar manganese by AtNRAMP3 and AtNRAMP4 is required for optimal photosynthesis and growth under manganese deficiency.</title>
        <authorList>
            <person name="Lanquar V."/>
            <person name="Ramos M.S."/>
            <person name="Lelievre F."/>
            <person name="Barbier-Brygoo H."/>
            <person name="Krieger-Liszkay A."/>
            <person name="Kraemer U."/>
            <person name="Thomine S."/>
        </authorList>
    </citation>
    <scope>FUNCTION</scope>
</reference>
<keyword id="KW-0406">Ion transport</keyword>
<keyword id="KW-0408">Iron</keyword>
<keyword id="KW-0410">Iron transport</keyword>
<keyword id="KW-0472">Membrane</keyword>
<keyword id="KW-1185">Reference proteome</keyword>
<keyword id="KW-0812">Transmembrane</keyword>
<keyword id="KW-1133">Transmembrane helix</keyword>
<keyword id="KW-0813">Transport</keyword>
<keyword id="KW-0926">Vacuole</keyword>
<dbReference type="EMBL" id="AF202540">
    <property type="protein sequence ID" value="AAF13279.1"/>
    <property type="molecule type" value="mRNA"/>
</dbReference>
<dbReference type="EMBL" id="AB007645">
    <property type="protein sequence ID" value="BAB09018.1"/>
    <property type="molecule type" value="Genomic_DNA"/>
</dbReference>
<dbReference type="EMBL" id="CP002688">
    <property type="protein sequence ID" value="AED98329.1"/>
    <property type="molecule type" value="Genomic_DNA"/>
</dbReference>
<dbReference type="EMBL" id="AY136467">
    <property type="protein sequence ID" value="AAM97132.1"/>
    <property type="molecule type" value="mRNA"/>
</dbReference>
<dbReference type="EMBL" id="BT003406">
    <property type="protein sequence ID" value="AAO30069.1"/>
    <property type="molecule type" value="mRNA"/>
</dbReference>
<dbReference type="EMBL" id="AK226381">
    <property type="protein sequence ID" value="BAE98528.1"/>
    <property type="molecule type" value="mRNA"/>
</dbReference>
<dbReference type="RefSeq" id="NP_201534.1">
    <property type="nucleotide sequence ID" value="NM_126133.4"/>
</dbReference>
<dbReference type="SMR" id="Q9FN18"/>
<dbReference type="BioGRID" id="22110">
    <property type="interactions" value="7"/>
</dbReference>
<dbReference type="FunCoup" id="Q9FN18">
    <property type="interactions" value="2453"/>
</dbReference>
<dbReference type="IntAct" id="Q9FN18">
    <property type="interactions" value="5"/>
</dbReference>
<dbReference type="STRING" id="3702.Q9FN18"/>
<dbReference type="TCDB" id="2.A.55.2.18">
    <property type="family name" value="the metal ion (mn(2+)-iron) transporter (nramp) family"/>
</dbReference>
<dbReference type="PaxDb" id="3702-AT5G67330.1"/>
<dbReference type="ProteomicsDB" id="239057"/>
<dbReference type="EnsemblPlants" id="AT5G67330.1">
    <property type="protein sequence ID" value="AT5G67330.1"/>
    <property type="gene ID" value="AT5G67330"/>
</dbReference>
<dbReference type="GeneID" id="836868"/>
<dbReference type="Gramene" id="AT5G67330.1">
    <property type="protein sequence ID" value="AT5G67330.1"/>
    <property type="gene ID" value="AT5G67330"/>
</dbReference>
<dbReference type="KEGG" id="ath:AT5G67330"/>
<dbReference type="Araport" id="AT5G67330"/>
<dbReference type="TAIR" id="AT5G67330">
    <property type="gene designation" value="NRAMP4"/>
</dbReference>
<dbReference type="eggNOG" id="KOG1291">
    <property type="taxonomic scope" value="Eukaryota"/>
</dbReference>
<dbReference type="HOGENOM" id="CLU_020088_5_1_1"/>
<dbReference type="InParanoid" id="Q9FN18"/>
<dbReference type="OMA" id="KMCFNYF"/>
<dbReference type="OrthoDB" id="409173at2759"/>
<dbReference type="PhylomeDB" id="Q9FN18"/>
<dbReference type="PRO" id="PR:Q9FN18"/>
<dbReference type="Proteomes" id="UP000006548">
    <property type="component" value="Chromosome 5"/>
</dbReference>
<dbReference type="ExpressionAtlas" id="Q9FN18">
    <property type="expression patterns" value="baseline and differential"/>
</dbReference>
<dbReference type="GO" id="GO:0000325">
    <property type="term" value="C:plant-type vacuole"/>
    <property type="evidence" value="ECO:0007005"/>
    <property type="project" value="TAIR"/>
</dbReference>
<dbReference type="GO" id="GO:0009536">
    <property type="term" value="C:plastid"/>
    <property type="evidence" value="ECO:0007005"/>
    <property type="project" value="TAIR"/>
</dbReference>
<dbReference type="GO" id="GO:0005774">
    <property type="term" value="C:vacuolar membrane"/>
    <property type="evidence" value="ECO:0000314"/>
    <property type="project" value="TAIR"/>
</dbReference>
<dbReference type="GO" id="GO:0005773">
    <property type="term" value="C:vacuole"/>
    <property type="evidence" value="ECO:0007005"/>
    <property type="project" value="TAIR"/>
</dbReference>
<dbReference type="GO" id="GO:0046873">
    <property type="term" value="F:metal ion transmembrane transporter activity"/>
    <property type="evidence" value="ECO:0007669"/>
    <property type="project" value="InterPro"/>
</dbReference>
<dbReference type="GO" id="GO:0042742">
    <property type="term" value="P:defense response to bacterium"/>
    <property type="evidence" value="ECO:0000315"/>
    <property type="project" value="TAIR"/>
</dbReference>
<dbReference type="GO" id="GO:0006826">
    <property type="term" value="P:iron ion transport"/>
    <property type="evidence" value="ECO:0007669"/>
    <property type="project" value="UniProtKB-KW"/>
</dbReference>
<dbReference type="GO" id="GO:0006828">
    <property type="term" value="P:manganese ion transport"/>
    <property type="evidence" value="ECO:0000315"/>
    <property type="project" value="TAIR"/>
</dbReference>
<dbReference type="GO" id="GO:2000379">
    <property type="term" value="P:positive regulation of reactive oxygen species metabolic process"/>
    <property type="evidence" value="ECO:0000316"/>
    <property type="project" value="TAIR"/>
</dbReference>
<dbReference type="GO" id="GO:0010039">
    <property type="term" value="P:response to iron ion"/>
    <property type="evidence" value="ECO:0000270"/>
    <property type="project" value="TAIR"/>
</dbReference>
<dbReference type="GO" id="GO:0009624">
    <property type="term" value="P:response to nematode"/>
    <property type="evidence" value="ECO:0007007"/>
    <property type="project" value="TAIR"/>
</dbReference>
<dbReference type="HAMAP" id="MF_00221">
    <property type="entry name" value="NRAMP"/>
    <property type="match status" value="1"/>
</dbReference>
<dbReference type="InterPro" id="IPR001046">
    <property type="entry name" value="NRAMP_fam"/>
</dbReference>
<dbReference type="NCBIfam" id="TIGR01197">
    <property type="entry name" value="nramp"/>
    <property type="match status" value="1"/>
</dbReference>
<dbReference type="NCBIfam" id="NF037982">
    <property type="entry name" value="Nramp_1"/>
    <property type="match status" value="1"/>
</dbReference>
<dbReference type="PANTHER" id="PTHR11706:SF111">
    <property type="entry name" value="METAL TRANSPORTER NRAMP4"/>
    <property type="match status" value="1"/>
</dbReference>
<dbReference type="PANTHER" id="PTHR11706">
    <property type="entry name" value="SOLUTE CARRIER PROTEIN FAMILY 11 MEMBER"/>
    <property type="match status" value="1"/>
</dbReference>
<dbReference type="Pfam" id="PF01566">
    <property type="entry name" value="Nramp"/>
    <property type="match status" value="1"/>
</dbReference>
<dbReference type="PRINTS" id="PR00447">
    <property type="entry name" value="NATRESASSCMP"/>
</dbReference>
<accession>Q9FN18</accession>
<accession>Q0WWH0</accession>
<accession>Q9SNV8</accession>
<feature type="chain" id="PRO_0000212601" description="Metal transporter Nramp4">
    <location>
        <begin position="1"/>
        <end position="512"/>
    </location>
</feature>
<feature type="transmembrane region" description="Helical" evidence="1">
    <location>
        <begin position="52"/>
        <end position="72"/>
    </location>
</feature>
<feature type="transmembrane region" description="Helical" evidence="1">
    <location>
        <begin position="80"/>
        <end position="100"/>
    </location>
</feature>
<feature type="transmembrane region" description="Helical" evidence="1">
    <location>
        <begin position="129"/>
        <end position="149"/>
    </location>
</feature>
<feature type="transmembrane region" description="Helical" evidence="1">
    <location>
        <begin position="161"/>
        <end position="181"/>
    </location>
</feature>
<feature type="transmembrane region" description="Helical" evidence="1">
    <location>
        <begin position="189"/>
        <end position="209"/>
    </location>
</feature>
<feature type="transmembrane region" description="Helical" evidence="1">
    <location>
        <begin position="235"/>
        <end position="255"/>
    </location>
</feature>
<feature type="transmembrane region" description="Helical" evidence="1">
    <location>
        <begin position="277"/>
        <end position="297"/>
    </location>
</feature>
<feature type="transmembrane region" description="Helical" evidence="1">
    <location>
        <begin position="323"/>
        <end position="343"/>
    </location>
</feature>
<feature type="transmembrane region" description="Helical" evidence="1">
    <location>
        <begin position="371"/>
        <end position="391"/>
    </location>
</feature>
<feature type="transmembrane region" description="Helical" evidence="1">
    <location>
        <begin position="402"/>
        <end position="422"/>
    </location>
</feature>
<feature type="transmembrane region" description="Helical" evidence="1">
    <location>
        <begin position="440"/>
        <end position="460"/>
    </location>
</feature>
<feature type="transmembrane region" description="Helical" evidence="1">
    <location>
        <begin position="468"/>
        <end position="488"/>
    </location>
</feature>
<feature type="sequence conflict" description="In Ref. 5; BAE98528." evidence="5" ref="5">
    <original>H</original>
    <variation>N</variation>
    <location>
        <position position="246"/>
    </location>
</feature>
<feature type="sequence conflict" description="In Ref. 1; AAF13279." evidence="5" ref="1">
    <original>L</original>
    <variation>V</variation>
    <location>
        <position position="467"/>
    </location>
</feature>
<sequence>MSETDRERPLLASEERAYEETEKVLIVGIDEEEDADYDDDPGNSPKFSWKKLWLFTGPGFLMSIAFLDPGNLESDLQAGAIAGYSLIWLLMWATAIGLLIQLLSARLGVATGRHLAELCREEYPTWARMVLWIMAEIALIGADIQEVIGSAIAIKILSNGLVPLWAGVVITALDCFIFLFLENYGIRKLEAVFAILIATMALAFAWMFGQTKPSGTELLVGALVPKLSSRTIKQAVGIVGCIIMPHNVFLHSALVQSREVDPKKRFRVKEALKYYSIESTGALAVSFIINVFVTTVFAKSFYGTEIADTIGLANAGQYLQDKYGGGFFPILYIWAIGVLAAGQSSTITGTYAGQFIMGGFLNLKMKKWVRALITRSCAIIPTMIVALVFDSSDSMLDELNEWLNVLQSVQIPFAVIPLLCLVSNEQIMGSFKIQPLVQTISWIVAALVIAINGYLMVDFFSGAATNLILLVPVIIFAIAYVVFVLYLISRGLTYTPWQLVASSHKEPQRDDE</sequence>
<name>NRAM4_ARATH</name>
<evidence type="ECO:0000255" key="1"/>
<evidence type="ECO:0000269" key="2">
    <source>
    </source>
</evidence>
<evidence type="ECO:0000269" key="3">
    <source>
    </source>
</evidence>
<evidence type="ECO:0000269" key="4">
    <source>
    </source>
</evidence>
<evidence type="ECO:0000305" key="5"/>